<dbReference type="EC" id="2.4.99.28" evidence="1"/>
<dbReference type="EMBL" id="CP002776">
    <property type="protein sequence ID" value="AEG32107.1"/>
    <property type="molecule type" value="Genomic_DNA"/>
</dbReference>
<dbReference type="RefSeq" id="WP_013835883.1">
    <property type="nucleotide sequence ID" value="NC_015581.1"/>
</dbReference>
<dbReference type="SMR" id="F6D9Q8"/>
<dbReference type="STRING" id="717773.Thicy_1343"/>
<dbReference type="KEGG" id="tcy:Thicy_1343"/>
<dbReference type="eggNOG" id="COG0772">
    <property type="taxonomic scope" value="Bacteria"/>
</dbReference>
<dbReference type="HOGENOM" id="CLU_029243_0_1_6"/>
<dbReference type="OrthoDB" id="9768187at2"/>
<dbReference type="UniPathway" id="UPA00219"/>
<dbReference type="Proteomes" id="UP000009232">
    <property type="component" value="Chromosome"/>
</dbReference>
<dbReference type="GO" id="GO:0032153">
    <property type="term" value="C:cell division site"/>
    <property type="evidence" value="ECO:0007669"/>
    <property type="project" value="UniProtKB-UniRule"/>
</dbReference>
<dbReference type="GO" id="GO:0005886">
    <property type="term" value="C:plasma membrane"/>
    <property type="evidence" value="ECO:0007669"/>
    <property type="project" value="UniProtKB-SubCell"/>
</dbReference>
<dbReference type="GO" id="GO:0015648">
    <property type="term" value="F:lipid-linked peptidoglycan transporter activity"/>
    <property type="evidence" value="ECO:0007669"/>
    <property type="project" value="TreeGrafter"/>
</dbReference>
<dbReference type="GO" id="GO:0008955">
    <property type="term" value="F:peptidoglycan glycosyltransferase activity"/>
    <property type="evidence" value="ECO:0007669"/>
    <property type="project" value="UniProtKB-UniRule"/>
</dbReference>
<dbReference type="GO" id="GO:0071555">
    <property type="term" value="P:cell wall organization"/>
    <property type="evidence" value="ECO:0007669"/>
    <property type="project" value="UniProtKB-KW"/>
</dbReference>
<dbReference type="GO" id="GO:0043093">
    <property type="term" value="P:FtsZ-dependent cytokinesis"/>
    <property type="evidence" value="ECO:0007669"/>
    <property type="project" value="UniProtKB-UniRule"/>
</dbReference>
<dbReference type="GO" id="GO:0009252">
    <property type="term" value="P:peptidoglycan biosynthetic process"/>
    <property type="evidence" value="ECO:0007669"/>
    <property type="project" value="UniProtKB-UniRule"/>
</dbReference>
<dbReference type="GO" id="GO:0008360">
    <property type="term" value="P:regulation of cell shape"/>
    <property type="evidence" value="ECO:0007669"/>
    <property type="project" value="UniProtKB-KW"/>
</dbReference>
<dbReference type="HAMAP" id="MF_00913">
    <property type="entry name" value="PGT_FtsW_proteobact"/>
    <property type="match status" value="1"/>
</dbReference>
<dbReference type="InterPro" id="IPR018365">
    <property type="entry name" value="Cell_cycle_FtsW-rel_CS"/>
</dbReference>
<dbReference type="InterPro" id="IPR013437">
    <property type="entry name" value="FtsW"/>
</dbReference>
<dbReference type="InterPro" id="IPR001182">
    <property type="entry name" value="FtsW/RodA"/>
</dbReference>
<dbReference type="NCBIfam" id="TIGR02614">
    <property type="entry name" value="ftsW"/>
    <property type="match status" value="1"/>
</dbReference>
<dbReference type="PANTHER" id="PTHR30474">
    <property type="entry name" value="CELL CYCLE PROTEIN"/>
    <property type="match status" value="1"/>
</dbReference>
<dbReference type="PANTHER" id="PTHR30474:SF2">
    <property type="entry name" value="PEPTIDOGLYCAN GLYCOSYLTRANSFERASE FTSW-RELATED"/>
    <property type="match status" value="1"/>
</dbReference>
<dbReference type="Pfam" id="PF01098">
    <property type="entry name" value="FTSW_RODA_SPOVE"/>
    <property type="match status" value="1"/>
</dbReference>
<dbReference type="PROSITE" id="PS00428">
    <property type="entry name" value="FTSW_RODA_SPOVE"/>
    <property type="match status" value="1"/>
</dbReference>
<keyword id="KW-0131">Cell cycle</keyword>
<keyword id="KW-0132">Cell division</keyword>
<keyword id="KW-0997">Cell inner membrane</keyword>
<keyword id="KW-1003">Cell membrane</keyword>
<keyword id="KW-0133">Cell shape</keyword>
<keyword id="KW-0961">Cell wall biogenesis/degradation</keyword>
<keyword id="KW-0328">Glycosyltransferase</keyword>
<keyword id="KW-0472">Membrane</keyword>
<keyword id="KW-0573">Peptidoglycan synthesis</keyword>
<keyword id="KW-1185">Reference proteome</keyword>
<keyword id="KW-0808">Transferase</keyword>
<keyword id="KW-0812">Transmembrane</keyword>
<keyword id="KW-1133">Transmembrane helix</keyword>
<feature type="chain" id="PRO_0000415214" description="Probable peptidoglycan glycosyltransferase FtsW">
    <location>
        <begin position="1"/>
        <end position="388"/>
    </location>
</feature>
<feature type="transmembrane region" description="Helical" evidence="1">
    <location>
        <begin position="16"/>
        <end position="36"/>
    </location>
</feature>
<feature type="transmembrane region" description="Helical" evidence="1">
    <location>
        <begin position="54"/>
        <end position="74"/>
    </location>
</feature>
<feature type="transmembrane region" description="Helical" evidence="1">
    <location>
        <begin position="82"/>
        <end position="102"/>
    </location>
</feature>
<feature type="transmembrane region" description="Helical" evidence="1">
    <location>
        <begin position="109"/>
        <end position="129"/>
    </location>
</feature>
<feature type="transmembrane region" description="Helical" evidence="1">
    <location>
        <begin position="144"/>
        <end position="164"/>
    </location>
</feature>
<feature type="transmembrane region" description="Helical" evidence="1">
    <location>
        <begin position="167"/>
        <end position="187"/>
    </location>
</feature>
<feature type="transmembrane region" description="Helical" evidence="1">
    <location>
        <begin position="189"/>
        <end position="209"/>
    </location>
</feature>
<feature type="transmembrane region" description="Helical" evidence="1">
    <location>
        <begin position="233"/>
        <end position="253"/>
    </location>
</feature>
<feature type="transmembrane region" description="Helical" evidence="1">
    <location>
        <begin position="277"/>
        <end position="297"/>
    </location>
</feature>
<feature type="transmembrane region" description="Helical" evidence="1">
    <location>
        <begin position="310"/>
        <end position="330"/>
    </location>
</feature>
<feature type="transmembrane region" description="Helical" evidence="1">
    <location>
        <begin position="342"/>
        <end position="362"/>
    </location>
</feature>
<gene>
    <name evidence="1" type="primary">ftsW</name>
    <name type="ordered locus">Thicy_1343</name>
</gene>
<reference key="1">
    <citation type="submission" date="2011-05" db="EMBL/GenBank/DDBJ databases">
        <title>Complete sequence of Thioalkalimicrobium cyclicum ALM1.</title>
        <authorList>
            <consortium name="US DOE Joint Genome Institute"/>
            <person name="Lucas S."/>
            <person name="Han J."/>
            <person name="Lapidus A."/>
            <person name="Cheng J.-F."/>
            <person name="Goodwin L."/>
            <person name="Pitluck S."/>
            <person name="Peters L."/>
            <person name="Mikhailova N."/>
            <person name="Davenport K."/>
            <person name="Han C."/>
            <person name="Tapia R."/>
            <person name="Land M."/>
            <person name="Hauser L."/>
            <person name="Kyrpides N."/>
            <person name="Ivanova N."/>
            <person name="Pagani I."/>
            <person name="Kappler U."/>
            <person name="Woyke T."/>
        </authorList>
    </citation>
    <scope>NUCLEOTIDE SEQUENCE [LARGE SCALE GENOMIC DNA]</scope>
    <source>
        <strain>DSM 14477 / JCM 11371 / ALM1</strain>
    </source>
</reference>
<comment type="function">
    <text evidence="1">Peptidoglycan polymerase that is essential for cell division.</text>
</comment>
<comment type="catalytic activity">
    <reaction evidence="1">
        <text>[GlcNAc-(1-&gt;4)-Mur2Ac(oyl-L-Ala-gamma-D-Glu-L-Lys-D-Ala-D-Ala)](n)-di-trans,octa-cis-undecaprenyl diphosphate + beta-D-GlcNAc-(1-&gt;4)-Mur2Ac(oyl-L-Ala-gamma-D-Glu-L-Lys-D-Ala-D-Ala)-di-trans,octa-cis-undecaprenyl diphosphate = [GlcNAc-(1-&gt;4)-Mur2Ac(oyl-L-Ala-gamma-D-Glu-L-Lys-D-Ala-D-Ala)](n+1)-di-trans,octa-cis-undecaprenyl diphosphate + di-trans,octa-cis-undecaprenyl diphosphate + H(+)</text>
        <dbReference type="Rhea" id="RHEA:23708"/>
        <dbReference type="Rhea" id="RHEA-COMP:9602"/>
        <dbReference type="Rhea" id="RHEA-COMP:9603"/>
        <dbReference type="ChEBI" id="CHEBI:15378"/>
        <dbReference type="ChEBI" id="CHEBI:58405"/>
        <dbReference type="ChEBI" id="CHEBI:60033"/>
        <dbReference type="ChEBI" id="CHEBI:78435"/>
        <dbReference type="EC" id="2.4.99.28"/>
    </reaction>
</comment>
<comment type="pathway">
    <text evidence="1">Cell wall biogenesis; peptidoglycan biosynthesis.</text>
</comment>
<comment type="subcellular location">
    <subcellularLocation>
        <location evidence="1">Cell inner membrane</location>
        <topology evidence="1">Multi-pass membrane protein</topology>
    </subcellularLocation>
    <text evidence="1">Localizes to the division septum.</text>
</comment>
<comment type="similarity">
    <text evidence="1">Belongs to the SEDS family. FtsW subfamily.</text>
</comment>
<name>FTSW_THICA</name>
<accession>F6D9Q8</accession>
<evidence type="ECO:0000255" key="1">
    <source>
        <dbReference type="HAMAP-Rule" id="MF_00913"/>
    </source>
</evidence>
<proteinExistence type="inferred from homology"/>
<sequence length="388" mass="42279">MANTWRLDIRGLDGSLVLIVLALITIGLVMVLSSSVAVSEVRFGHQWHYFQRQVFALGVGGLFAALVLMVPSQSWLQHRGKWFLLGLVLLALVLIFGREIGGAKRWLPLVVMNFQPAEWMKIATILFLAGYLQRHQDAVKQDSTAVIRLFLPFGIMAGLLLLQPDYGTTVLIAGVLVGMLFIAGAPFRYFVITVLPIGAILAVLLINSPYRMARVMNFMDPWQDPYGVGYQLSQALMAIGSGGITGSGLGASVQKLLYLPDAHTDFMFAVFAEETGWLGVVILLSLYGLLLWRMFAVAQAAWLPQAPFKALVVYGVAIMFAGQLLINVGVNLGVFPTKGLTLPFVSYGGSSLMMALLAIGLVLRIDYETRLIKGHSTEELSANPSFGS</sequence>
<organism>
    <name type="scientific">Thiomicrospira cyclica (strain DSM 14477 / JCM 11371 / ALM1)</name>
    <name type="common">Thioalkalimicrobium cyclicum</name>
    <dbReference type="NCBI Taxonomy" id="717773"/>
    <lineage>
        <taxon>Bacteria</taxon>
        <taxon>Pseudomonadati</taxon>
        <taxon>Pseudomonadota</taxon>
        <taxon>Gammaproteobacteria</taxon>
        <taxon>Thiotrichales</taxon>
        <taxon>Piscirickettsiaceae</taxon>
        <taxon>Thiomicrospira</taxon>
    </lineage>
</organism>
<protein>
    <recommendedName>
        <fullName evidence="1">Probable peptidoglycan glycosyltransferase FtsW</fullName>
        <shortName evidence="1">PGT</shortName>
        <ecNumber evidence="1">2.4.99.28</ecNumber>
    </recommendedName>
    <alternativeName>
        <fullName evidence="1">Cell division protein FtsW</fullName>
    </alternativeName>
    <alternativeName>
        <fullName evidence="1">Cell wall polymerase</fullName>
    </alternativeName>
    <alternativeName>
        <fullName evidence="1">Peptidoglycan polymerase</fullName>
        <shortName evidence="1">PG polymerase</shortName>
    </alternativeName>
</protein>